<organism>
    <name type="scientific">Shewanella piezotolerans (strain WP3 / JCM 13877)</name>
    <dbReference type="NCBI Taxonomy" id="225849"/>
    <lineage>
        <taxon>Bacteria</taxon>
        <taxon>Pseudomonadati</taxon>
        <taxon>Pseudomonadota</taxon>
        <taxon>Gammaproteobacteria</taxon>
        <taxon>Alteromonadales</taxon>
        <taxon>Shewanellaceae</taxon>
        <taxon>Shewanella</taxon>
    </lineage>
</organism>
<feature type="chain" id="PRO_1000200853" description="23S rRNA (uracil(1939)-C(5))-methyltransferase RlmD">
    <location>
        <begin position="1"/>
        <end position="445"/>
    </location>
</feature>
<feature type="domain" description="TRAM" evidence="1">
    <location>
        <begin position="12"/>
        <end position="70"/>
    </location>
</feature>
<feature type="active site" description="Nucleophile" evidence="1">
    <location>
        <position position="401"/>
    </location>
</feature>
<feature type="binding site" evidence="1">
    <location>
        <position position="83"/>
    </location>
    <ligand>
        <name>[4Fe-4S] cluster</name>
        <dbReference type="ChEBI" id="CHEBI:49883"/>
    </ligand>
</feature>
<feature type="binding site" evidence="1">
    <location>
        <position position="89"/>
    </location>
    <ligand>
        <name>[4Fe-4S] cluster</name>
        <dbReference type="ChEBI" id="CHEBI:49883"/>
    </ligand>
</feature>
<feature type="binding site" evidence="1">
    <location>
        <position position="92"/>
    </location>
    <ligand>
        <name>[4Fe-4S] cluster</name>
        <dbReference type="ChEBI" id="CHEBI:49883"/>
    </ligand>
</feature>
<feature type="binding site" evidence="1">
    <location>
        <position position="171"/>
    </location>
    <ligand>
        <name>[4Fe-4S] cluster</name>
        <dbReference type="ChEBI" id="CHEBI:49883"/>
    </ligand>
</feature>
<feature type="binding site" evidence="1">
    <location>
        <position position="278"/>
    </location>
    <ligand>
        <name>S-adenosyl-L-methionine</name>
        <dbReference type="ChEBI" id="CHEBI:59789"/>
    </ligand>
</feature>
<feature type="binding site" evidence="1">
    <location>
        <position position="307"/>
    </location>
    <ligand>
        <name>S-adenosyl-L-methionine</name>
        <dbReference type="ChEBI" id="CHEBI:59789"/>
    </ligand>
</feature>
<feature type="binding site" evidence="1">
    <location>
        <position position="312"/>
    </location>
    <ligand>
        <name>S-adenosyl-L-methionine</name>
        <dbReference type="ChEBI" id="CHEBI:59789"/>
    </ligand>
</feature>
<feature type="binding site" evidence="1">
    <location>
        <position position="328"/>
    </location>
    <ligand>
        <name>S-adenosyl-L-methionine</name>
        <dbReference type="ChEBI" id="CHEBI:59789"/>
    </ligand>
</feature>
<feature type="binding site" evidence="1">
    <location>
        <position position="355"/>
    </location>
    <ligand>
        <name>S-adenosyl-L-methionine</name>
        <dbReference type="ChEBI" id="CHEBI:59789"/>
    </ligand>
</feature>
<feature type="binding site" evidence="1">
    <location>
        <position position="375"/>
    </location>
    <ligand>
        <name>S-adenosyl-L-methionine</name>
        <dbReference type="ChEBI" id="CHEBI:59789"/>
    </ligand>
</feature>
<evidence type="ECO:0000255" key="1">
    <source>
        <dbReference type="HAMAP-Rule" id="MF_01010"/>
    </source>
</evidence>
<accession>B8CJP2</accession>
<sequence>MAQFFKAKPNRSKQLSSKLSLNVTQLDHLGAGIAHHQGKIVFINGALPGETVQVQLTEQKKKFSRAKLLKVETASGERVSPLCIHYEKCGGCDLQHLNVESQRAHKAKALQELVAKFAQTTASQVCETLSDSPWHYRRRARLATWFDKKTKHISLGFRASSSSDVVEIQSCVVLAKPLSALIPELAFLLNQLSGKKALGHVELTLADNGIFVVLRVTKALSDKDRQRLAEFGASHSLNMLLQDDDANTESLSGHGQQPFYSFNDSDAELKFSAGNFIQVNASVNQAMVNQAVDWLAPQANERVLDLFCGIGNFSLPLAKSGAEVIGVEGVPAMVEQATVNAKGAALDKVSFYHADLSADLSQQPWLGKVDKMLIDPARAGAYESMLSLKKLKPQALVYVSCNPASLARDSEVILKQGYRLTKIAMVDMFPQTHHLESMALFELGK</sequence>
<keyword id="KW-0004">4Fe-4S</keyword>
<keyword id="KW-0408">Iron</keyword>
<keyword id="KW-0411">Iron-sulfur</keyword>
<keyword id="KW-0479">Metal-binding</keyword>
<keyword id="KW-0489">Methyltransferase</keyword>
<keyword id="KW-0698">rRNA processing</keyword>
<keyword id="KW-0949">S-adenosyl-L-methionine</keyword>
<keyword id="KW-0808">Transferase</keyword>
<gene>
    <name evidence="1" type="primary">rlmD</name>
    <name type="synonym">rumA</name>
    <name type="ordered locus">swp_1352</name>
</gene>
<proteinExistence type="inferred from homology"/>
<protein>
    <recommendedName>
        <fullName evidence="1">23S rRNA (uracil(1939)-C(5))-methyltransferase RlmD</fullName>
        <ecNumber evidence="1">2.1.1.190</ecNumber>
    </recommendedName>
    <alternativeName>
        <fullName evidence="1">23S rRNA(m5U1939)-methyltransferase</fullName>
    </alternativeName>
</protein>
<reference key="1">
    <citation type="journal article" date="2008" name="PLoS ONE">
        <title>Environmental adaptation: genomic analysis of the piezotolerant and psychrotolerant deep-sea iron reducing bacterium Shewanella piezotolerans WP3.</title>
        <authorList>
            <person name="Wang F."/>
            <person name="Wang J."/>
            <person name="Jian H."/>
            <person name="Zhang B."/>
            <person name="Li S."/>
            <person name="Wang F."/>
            <person name="Zeng X."/>
            <person name="Gao L."/>
            <person name="Bartlett D.H."/>
            <person name="Yu J."/>
            <person name="Hu S."/>
            <person name="Xiao X."/>
        </authorList>
    </citation>
    <scope>NUCLEOTIDE SEQUENCE [LARGE SCALE GENOMIC DNA]</scope>
    <source>
        <strain>WP3 / JCM 13877</strain>
    </source>
</reference>
<name>RLMD_SHEPW</name>
<dbReference type="EC" id="2.1.1.190" evidence="1"/>
<dbReference type="EMBL" id="CP000472">
    <property type="protein sequence ID" value="ACJ28139.1"/>
    <property type="molecule type" value="Genomic_DNA"/>
</dbReference>
<dbReference type="RefSeq" id="WP_020911517.1">
    <property type="nucleotide sequence ID" value="NC_011566.1"/>
</dbReference>
<dbReference type="SMR" id="B8CJP2"/>
<dbReference type="STRING" id="225849.swp_1352"/>
<dbReference type="KEGG" id="swp:swp_1352"/>
<dbReference type="eggNOG" id="COG2265">
    <property type="taxonomic scope" value="Bacteria"/>
</dbReference>
<dbReference type="HOGENOM" id="CLU_014689_8_2_6"/>
<dbReference type="OrthoDB" id="9804590at2"/>
<dbReference type="Proteomes" id="UP000000753">
    <property type="component" value="Chromosome"/>
</dbReference>
<dbReference type="GO" id="GO:0051539">
    <property type="term" value="F:4 iron, 4 sulfur cluster binding"/>
    <property type="evidence" value="ECO:0007669"/>
    <property type="project" value="UniProtKB-KW"/>
</dbReference>
<dbReference type="GO" id="GO:0005506">
    <property type="term" value="F:iron ion binding"/>
    <property type="evidence" value="ECO:0007669"/>
    <property type="project" value="UniProtKB-UniRule"/>
</dbReference>
<dbReference type="GO" id="GO:0003723">
    <property type="term" value="F:RNA binding"/>
    <property type="evidence" value="ECO:0007669"/>
    <property type="project" value="InterPro"/>
</dbReference>
<dbReference type="GO" id="GO:0070041">
    <property type="term" value="F:rRNA (uridine-C5-)-methyltransferase activity"/>
    <property type="evidence" value="ECO:0007669"/>
    <property type="project" value="UniProtKB-UniRule"/>
</dbReference>
<dbReference type="GO" id="GO:0070475">
    <property type="term" value="P:rRNA base methylation"/>
    <property type="evidence" value="ECO:0007669"/>
    <property type="project" value="TreeGrafter"/>
</dbReference>
<dbReference type="CDD" id="cd02440">
    <property type="entry name" value="AdoMet_MTases"/>
    <property type="match status" value="1"/>
</dbReference>
<dbReference type="FunFam" id="3.40.50.150:FF:000009">
    <property type="entry name" value="23S rRNA (Uracil(1939)-C(5))-methyltransferase RlmD"/>
    <property type="match status" value="1"/>
</dbReference>
<dbReference type="FunFam" id="2.40.50.140:FF:000097">
    <property type="entry name" value="23S rRNA (uracil(1939)-C(5))-methyltransferase RlmD"/>
    <property type="match status" value="1"/>
</dbReference>
<dbReference type="Gene3D" id="2.40.50.1070">
    <property type="match status" value="1"/>
</dbReference>
<dbReference type="Gene3D" id="2.40.50.140">
    <property type="entry name" value="Nucleic acid-binding proteins"/>
    <property type="match status" value="1"/>
</dbReference>
<dbReference type="Gene3D" id="3.40.50.150">
    <property type="entry name" value="Vaccinia Virus protein VP39"/>
    <property type="match status" value="1"/>
</dbReference>
<dbReference type="HAMAP" id="MF_01010">
    <property type="entry name" value="23SrRNA_methyltr_RlmD"/>
    <property type="match status" value="1"/>
</dbReference>
<dbReference type="InterPro" id="IPR001566">
    <property type="entry name" value="23S_rRNA_MeTrfase_RlmD"/>
</dbReference>
<dbReference type="InterPro" id="IPR030390">
    <property type="entry name" value="MeTrfase_TrmA_AS"/>
</dbReference>
<dbReference type="InterPro" id="IPR030391">
    <property type="entry name" value="MeTrfase_TrmA_CS"/>
</dbReference>
<dbReference type="InterPro" id="IPR012340">
    <property type="entry name" value="NA-bd_OB-fold"/>
</dbReference>
<dbReference type="InterPro" id="IPR029063">
    <property type="entry name" value="SAM-dependent_MTases_sf"/>
</dbReference>
<dbReference type="InterPro" id="IPR002792">
    <property type="entry name" value="TRAM_dom"/>
</dbReference>
<dbReference type="InterPro" id="IPR010280">
    <property type="entry name" value="U5_MeTrfase_fam"/>
</dbReference>
<dbReference type="NCBIfam" id="NF009639">
    <property type="entry name" value="PRK13168.1"/>
    <property type="match status" value="1"/>
</dbReference>
<dbReference type="NCBIfam" id="TIGR00479">
    <property type="entry name" value="rumA"/>
    <property type="match status" value="1"/>
</dbReference>
<dbReference type="PANTHER" id="PTHR11061:SF49">
    <property type="entry name" value="23S RRNA (URACIL(1939)-C(5))-METHYLTRANSFERASE RLMD"/>
    <property type="match status" value="1"/>
</dbReference>
<dbReference type="PANTHER" id="PTHR11061">
    <property type="entry name" value="RNA M5U METHYLTRANSFERASE"/>
    <property type="match status" value="1"/>
</dbReference>
<dbReference type="Pfam" id="PF01938">
    <property type="entry name" value="TRAM"/>
    <property type="match status" value="1"/>
</dbReference>
<dbReference type="Pfam" id="PF05958">
    <property type="entry name" value="tRNA_U5-meth_tr"/>
    <property type="match status" value="1"/>
</dbReference>
<dbReference type="SUPFAM" id="SSF50249">
    <property type="entry name" value="Nucleic acid-binding proteins"/>
    <property type="match status" value="1"/>
</dbReference>
<dbReference type="SUPFAM" id="SSF53335">
    <property type="entry name" value="S-adenosyl-L-methionine-dependent methyltransferases"/>
    <property type="match status" value="1"/>
</dbReference>
<dbReference type="PROSITE" id="PS51687">
    <property type="entry name" value="SAM_MT_RNA_M5U"/>
    <property type="match status" value="1"/>
</dbReference>
<dbReference type="PROSITE" id="PS50926">
    <property type="entry name" value="TRAM"/>
    <property type="match status" value="1"/>
</dbReference>
<dbReference type="PROSITE" id="PS01230">
    <property type="entry name" value="TRMA_1"/>
    <property type="match status" value="1"/>
</dbReference>
<dbReference type="PROSITE" id="PS01231">
    <property type="entry name" value="TRMA_2"/>
    <property type="match status" value="1"/>
</dbReference>
<comment type="function">
    <text evidence="1">Catalyzes the formation of 5-methyl-uridine at position 1939 (m5U1939) in 23S rRNA.</text>
</comment>
<comment type="catalytic activity">
    <reaction evidence="1">
        <text>uridine(1939) in 23S rRNA + S-adenosyl-L-methionine = 5-methyluridine(1939) in 23S rRNA + S-adenosyl-L-homocysteine + H(+)</text>
        <dbReference type="Rhea" id="RHEA:42908"/>
        <dbReference type="Rhea" id="RHEA-COMP:10278"/>
        <dbReference type="Rhea" id="RHEA-COMP:10279"/>
        <dbReference type="ChEBI" id="CHEBI:15378"/>
        <dbReference type="ChEBI" id="CHEBI:57856"/>
        <dbReference type="ChEBI" id="CHEBI:59789"/>
        <dbReference type="ChEBI" id="CHEBI:65315"/>
        <dbReference type="ChEBI" id="CHEBI:74447"/>
        <dbReference type="EC" id="2.1.1.190"/>
    </reaction>
</comment>
<comment type="similarity">
    <text evidence="1">Belongs to the class I-like SAM-binding methyltransferase superfamily. RNA M5U methyltransferase family. RlmD subfamily.</text>
</comment>